<reference key="1">
    <citation type="journal article" date="2011" name="J. Bacteriol.">
        <title>Comparative genomics of 28 Salmonella enterica isolates: evidence for CRISPR-mediated adaptive sublineage evolution.</title>
        <authorList>
            <person name="Fricke W.F."/>
            <person name="Mammel M.K."/>
            <person name="McDermott P.F."/>
            <person name="Tartera C."/>
            <person name="White D.G."/>
            <person name="Leclerc J.E."/>
            <person name="Ravel J."/>
            <person name="Cebula T.A."/>
        </authorList>
    </citation>
    <scope>NUCLEOTIDE SEQUENCE [LARGE SCALE GENOMIC DNA]</scope>
    <source>
        <strain>CT_02021853</strain>
    </source>
</reference>
<gene>
    <name evidence="1" type="primary">cutC</name>
    <name type="ordered locus">SeD_A1340</name>
</gene>
<protein>
    <recommendedName>
        <fullName evidence="1">PF03932 family protein CutC</fullName>
    </recommendedName>
</protein>
<sequence length="248" mass="26611">MALLEICCYSMECALTAQRNGADRIELCAAPKEGGLTPSFGVLRSVREHITIPVHPIIRPRGGDFYYTDGEFAAMLEDIRLVRELGFPGLVTGVLTVDGDVDMSRMEKIMAAAGPLAVTFHRAFDMCANPFNALKNLADAGVARVLTSGQKADAAQGLSIIMELIAQGDAPTIMAGAGVRANNLQNFLDAGVREVHSSAGVLLPSPMRYRNQGLSMSADIQADEYSRYRVEGAAVAEMKGIIVRHQAK</sequence>
<proteinExistence type="inferred from homology"/>
<evidence type="ECO:0000255" key="1">
    <source>
        <dbReference type="HAMAP-Rule" id="MF_00795"/>
    </source>
</evidence>
<dbReference type="EMBL" id="CP001144">
    <property type="protein sequence ID" value="ACH76165.1"/>
    <property type="molecule type" value="Genomic_DNA"/>
</dbReference>
<dbReference type="RefSeq" id="WP_001185770.1">
    <property type="nucleotide sequence ID" value="NC_011205.1"/>
</dbReference>
<dbReference type="SMR" id="B5FSM4"/>
<dbReference type="KEGG" id="sed:SeD_A1340"/>
<dbReference type="HOGENOM" id="CLU_050555_3_1_6"/>
<dbReference type="Proteomes" id="UP000008322">
    <property type="component" value="Chromosome"/>
</dbReference>
<dbReference type="GO" id="GO:0005737">
    <property type="term" value="C:cytoplasm"/>
    <property type="evidence" value="ECO:0007669"/>
    <property type="project" value="UniProtKB-SubCell"/>
</dbReference>
<dbReference type="GO" id="GO:0005507">
    <property type="term" value="F:copper ion binding"/>
    <property type="evidence" value="ECO:0007669"/>
    <property type="project" value="TreeGrafter"/>
</dbReference>
<dbReference type="FunFam" id="3.20.20.380:FF:000001">
    <property type="entry name" value="Copper homeostasis protein CutC"/>
    <property type="match status" value="1"/>
</dbReference>
<dbReference type="Gene3D" id="3.20.20.380">
    <property type="entry name" value="Copper homeostasis (CutC) domain"/>
    <property type="match status" value="1"/>
</dbReference>
<dbReference type="HAMAP" id="MF_00795">
    <property type="entry name" value="CutC"/>
    <property type="match status" value="1"/>
</dbReference>
<dbReference type="InterPro" id="IPR005627">
    <property type="entry name" value="CutC-like"/>
</dbReference>
<dbReference type="InterPro" id="IPR036822">
    <property type="entry name" value="CutC-like_dom_sf"/>
</dbReference>
<dbReference type="NCBIfam" id="NF008603">
    <property type="entry name" value="PRK11572.1"/>
    <property type="match status" value="1"/>
</dbReference>
<dbReference type="PANTHER" id="PTHR12598">
    <property type="entry name" value="COPPER HOMEOSTASIS PROTEIN CUTC"/>
    <property type="match status" value="1"/>
</dbReference>
<dbReference type="PANTHER" id="PTHR12598:SF0">
    <property type="entry name" value="COPPER HOMEOSTASIS PROTEIN CUTC HOMOLOG"/>
    <property type="match status" value="1"/>
</dbReference>
<dbReference type="Pfam" id="PF03932">
    <property type="entry name" value="CutC"/>
    <property type="match status" value="1"/>
</dbReference>
<dbReference type="SUPFAM" id="SSF110395">
    <property type="entry name" value="CutC-like"/>
    <property type="match status" value="1"/>
</dbReference>
<name>CUTC_SALDC</name>
<organism>
    <name type="scientific">Salmonella dublin (strain CT_02021853)</name>
    <dbReference type="NCBI Taxonomy" id="439851"/>
    <lineage>
        <taxon>Bacteria</taxon>
        <taxon>Pseudomonadati</taxon>
        <taxon>Pseudomonadota</taxon>
        <taxon>Gammaproteobacteria</taxon>
        <taxon>Enterobacterales</taxon>
        <taxon>Enterobacteriaceae</taxon>
        <taxon>Salmonella</taxon>
    </lineage>
</organism>
<accession>B5FSM4</accession>
<comment type="subunit">
    <text evidence="1">Homodimer.</text>
</comment>
<comment type="subcellular location">
    <subcellularLocation>
        <location evidence="1">Cytoplasm</location>
    </subcellularLocation>
</comment>
<comment type="similarity">
    <text evidence="1">Belongs to the CutC family.</text>
</comment>
<comment type="caution">
    <text evidence="1">Once thought to be involved in copper homeostasis, experiments in E.coli have shown this is not the case.</text>
</comment>
<keyword id="KW-0963">Cytoplasm</keyword>
<feature type="chain" id="PRO_1000133843" description="PF03932 family protein CutC">
    <location>
        <begin position="1"/>
        <end position="248"/>
    </location>
</feature>